<comment type="function">
    <text evidence="1 3">Catalyzes an oxidative deamination of predominantly hydrophobic and aromatic L-amino acids, thus producing hydrogen peroxide that may contribute to the diverse toxic effects of this enzyme (PubMed:18294891). Is highly active on L-Met, L-Leu, L-Phe, L-Trp, and L-Arg, and no weakly or no active on L-His, L-Tyr, L-Ile, L-Gln, and L-Lys (PubMed:18294891). Exhibits diverse biological activities, such as antibacterial activity against both Gram-positive (B.subtilis) and Gram-negative (E.coli) bacteria, and inhibition of ADP- or collagen-induced platelet aggregation. Effects of snake L-amino oxidases on platelets are controversial, since they either induce aggregation or inhibit agonist-induced aggregation. These different effects are probably due to different experimental conditions. This protein may also induce hemorrhage, hemolysis, edema, apoptosis, and have antiparasitic activities.</text>
</comment>
<comment type="catalytic activity">
    <reaction evidence="3">
        <text>an L-alpha-amino acid + O2 + H2O = a 2-oxocarboxylate + H2O2 + NH4(+)</text>
        <dbReference type="Rhea" id="RHEA:13781"/>
        <dbReference type="ChEBI" id="CHEBI:15377"/>
        <dbReference type="ChEBI" id="CHEBI:15379"/>
        <dbReference type="ChEBI" id="CHEBI:16240"/>
        <dbReference type="ChEBI" id="CHEBI:28938"/>
        <dbReference type="ChEBI" id="CHEBI:35179"/>
        <dbReference type="ChEBI" id="CHEBI:59869"/>
        <dbReference type="EC" id="1.4.3.2"/>
    </reaction>
</comment>
<comment type="catalytic activity">
    <reaction evidence="3">
        <text>L-leucine + O2 + H2O = 4-methyl-2-oxopentanoate + H2O2 + NH4(+)</text>
        <dbReference type="Rhea" id="RHEA:60996"/>
        <dbReference type="ChEBI" id="CHEBI:15377"/>
        <dbReference type="ChEBI" id="CHEBI:15379"/>
        <dbReference type="ChEBI" id="CHEBI:16240"/>
        <dbReference type="ChEBI" id="CHEBI:17865"/>
        <dbReference type="ChEBI" id="CHEBI:28938"/>
        <dbReference type="ChEBI" id="CHEBI:57427"/>
    </reaction>
</comment>
<comment type="catalytic activity">
    <reaction evidence="3">
        <text>L-phenylalanine + O2 + H2O = 3-phenylpyruvate + H2O2 + NH4(+)</text>
        <dbReference type="Rhea" id="RHEA:61240"/>
        <dbReference type="ChEBI" id="CHEBI:15377"/>
        <dbReference type="ChEBI" id="CHEBI:15379"/>
        <dbReference type="ChEBI" id="CHEBI:16240"/>
        <dbReference type="ChEBI" id="CHEBI:18005"/>
        <dbReference type="ChEBI" id="CHEBI:28938"/>
        <dbReference type="ChEBI" id="CHEBI:58095"/>
    </reaction>
</comment>
<comment type="catalytic activity">
    <reaction evidence="3">
        <text>L-tryptophan + O2 + H2O = indole-3-pyruvate + H2O2 + NH4(+)</text>
        <dbReference type="Rhea" id="RHEA:61244"/>
        <dbReference type="ChEBI" id="CHEBI:15377"/>
        <dbReference type="ChEBI" id="CHEBI:15379"/>
        <dbReference type="ChEBI" id="CHEBI:16240"/>
        <dbReference type="ChEBI" id="CHEBI:17640"/>
        <dbReference type="ChEBI" id="CHEBI:28938"/>
        <dbReference type="ChEBI" id="CHEBI:57912"/>
    </reaction>
</comment>
<comment type="catalytic activity">
    <reaction evidence="3">
        <text>L-methionine + O2 + H2O = 4-methylsulfanyl-2-oxobutanoate + H2O2 + NH4(+)</text>
        <dbReference type="Rhea" id="RHEA:61236"/>
        <dbReference type="ChEBI" id="CHEBI:15377"/>
        <dbReference type="ChEBI" id="CHEBI:15379"/>
        <dbReference type="ChEBI" id="CHEBI:16240"/>
        <dbReference type="ChEBI" id="CHEBI:16723"/>
        <dbReference type="ChEBI" id="CHEBI:28938"/>
        <dbReference type="ChEBI" id="CHEBI:57844"/>
    </reaction>
</comment>
<comment type="catalytic activity">
    <reaction evidence="3">
        <text>L-arginine + O2 + H2O = 5-guanidino-2-oxopentanoate + H2O2 + NH4(+)</text>
        <dbReference type="Rhea" id="RHEA:51404"/>
        <dbReference type="ChEBI" id="CHEBI:15377"/>
        <dbReference type="ChEBI" id="CHEBI:15379"/>
        <dbReference type="ChEBI" id="CHEBI:16240"/>
        <dbReference type="ChEBI" id="CHEBI:28938"/>
        <dbReference type="ChEBI" id="CHEBI:32682"/>
        <dbReference type="ChEBI" id="CHEBI:58489"/>
    </reaction>
</comment>
<comment type="cofactor">
    <cofactor evidence="2">
        <name>FAD</name>
        <dbReference type="ChEBI" id="CHEBI:57692"/>
    </cofactor>
</comment>
<comment type="biophysicochemical properties">
    <kinetics>
        <KM evidence="3">0.885 mM for L-Met</KM>
        <KM evidence="3">0.75 mM for L-Leu</KM>
        <KM evidence="3">0.147 mM for L-Trp</KM>
        <KM evidence="3">0.051 mM for L-Phe</KM>
    </kinetics>
</comment>
<comment type="subunit">
    <text evidence="3">Homodimer; non-covalently linked.</text>
</comment>
<comment type="subcellular location">
    <subcellularLocation>
        <location evidence="3">Secreted</location>
    </subcellularLocation>
</comment>
<comment type="tissue specificity">
    <text evidence="6">Expressed by the venom gland.</text>
</comment>
<comment type="PTM">
    <text evidence="2">N-glycosylated.</text>
</comment>
<comment type="similarity">
    <text evidence="5">Belongs to the flavin monoamine oxidase family. FIG1 subfamily.</text>
</comment>
<protein>
    <recommendedName>
        <fullName>L-amino-acid oxidase</fullName>
        <shortName evidence="4">LAAO</shortName>
        <shortName>LAO</shortName>
        <ecNumber evidence="3">1.4.3.2</ecNumber>
    </recommendedName>
</protein>
<evidence type="ECO:0000250" key="1">
    <source>
        <dbReference type="UniProtKB" id="P0CC17"/>
    </source>
</evidence>
<evidence type="ECO:0000250" key="2">
    <source>
        <dbReference type="UniProtKB" id="P81382"/>
    </source>
</evidence>
<evidence type="ECO:0000269" key="3">
    <source>
    </source>
</evidence>
<evidence type="ECO:0000303" key="4">
    <source>
    </source>
</evidence>
<evidence type="ECO:0000305" key="5"/>
<evidence type="ECO:0000305" key="6">
    <source>
    </source>
</evidence>
<dbReference type="EC" id="1.4.3.2" evidence="3"/>
<dbReference type="SABIO-RK" id="P0DI91"/>
<dbReference type="GO" id="GO:0005576">
    <property type="term" value="C:extracellular region"/>
    <property type="evidence" value="ECO:0007669"/>
    <property type="project" value="UniProtKB-SubCell"/>
</dbReference>
<dbReference type="GO" id="GO:0106329">
    <property type="term" value="F:L-phenylalaine oxidase activity"/>
    <property type="evidence" value="ECO:0007669"/>
    <property type="project" value="RHEA"/>
</dbReference>
<dbReference type="GO" id="GO:0090729">
    <property type="term" value="F:toxin activity"/>
    <property type="evidence" value="ECO:0007669"/>
    <property type="project" value="UniProtKB-KW"/>
</dbReference>
<dbReference type="GO" id="GO:0006915">
    <property type="term" value="P:apoptotic process"/>
    <property type="evidence" value="ECO:0007669"/>
    <property type="project" value="UniProtKB-KW"/>
</dbReference>
<dbReference type="GO" id="GO:0042742">
    <property type="term" value="P:defense response to bacterium"/>
    <property type="evidence" value="ECO:0007669"/>
    <property type="project" value="UniProtKB-KW"/>
</dbReference>
<dbReference type="GO" id="GO:0031640">
    <property type="term" value="P:killing of cells of another organism"/>
    <property type="evidence" value="ECO:0007669"/>
    <property type="project" value="UniProtKB-KW"/>
</dbReference>
<dbReference type="Gene3D" id="3.90.660.10">
    <property type="match status" value="1"/>
</dbReference>
<keyword id="KW-0044">Antibiotic</keyword>
<keyword id="KW-0929">Antimicrobial</keyword>
<keyword id="KW-0053">Apoptosis</keyword>
<keyword id="KW-0204">Cytolysis</keyword>
<keyword id="KW-0903">Direct protein sequencing</keyword>
<keyword id="KW-1015">Disulfide bond</keyword>
<keyword id="KW-0274">FAD</keyword>
<keyword id="KW-0285">Flavoprotein</keyword>
<keyword id="KW-0325">Glycoprotein</keyword>
<keyword id="KW-0354">Hemolysis</keyword>
<keyword id="KW-1199">Hemostasis impairing toxin</keyword>
<keyword id="KW-0560">Oxidoreductase</keyword>
<keyword id="KW-1201">Platelet aggregation inhibiting toxin</keyword>
<keyword id="KW-0964">Secreted</keyword>
<keyword id="KW-0800">Toxin</keyword>
<name>OXLA_NAJOX</name>
<sequence>DDRRSPLEECFQQNDYEEFLEIARNSQLYQESLREDSSYHLSFIESLKSDALFSYEKKFWEADGIHGGKVINDLSLIHDLPKREIQALCYPSIKK</sequence>
<reference key="1">
    <citation type="journal article" date="2008" name="Comp. Biochem. Physiol.">
        <title>L-Amino acid oxidase from Naja naja oxiana venom.</title>
        <authorList>
            <person name="Samel M."/>
            <person name="Tonismagi K."/>
            <person name="Ronnholm G."/>
            <person name="Vija H."/>
            <person name="Siigur J."/>
            <person name="Kalkkinen N."/>
            <person name="Siigur E."/>
        </authorList>
    </citation>
    <scope>PROTEIN SEQUENCE</scope>
    <scope>FUNCTION</scope>
    <scope>SUBUNIT</scope>
    <scope>SUBCELLULAR LOCATION</scope>
    <scope>BIOPHYSICOCHEMICAL PROPERTIES</scope>
    <scope>SUBSTRATE SPECIFICITY</scope>
    <source>
        <tissue>Venom</tissue>
    </source>
</reference>
<accession>P0DI91</accession>
<feature type="chain" id="PRO_0000412604" description="L-amino-acid oxidase">
    <location>
        <begin position="1"/>
        <end position="95" status="greater than"/>
    </location>
</feature>
<feature type="disulfide bond" evidence="2">
    <location>
        <begin position="10"/>
        <end status="unknown"/>
    </location>
</feature>
<feature type="disulfide bond" evidence="2">
    <location>
        <begin status="unknown"/>
        <end position="89"/>
    </location>
</feature>
<feature type="non-consecutive residues" evidence="4">
    <location>
        <begin position="25"/>
        <end position="26"/>
    </location>
</feature>
<feature type="non-consecutive residues" evidence="4">
    <location>
        <begin position="34"/>
        <end position="35"/>
    </location>
</feature>
<feature type="non-consecutive residues" evidence="4">
    <location>
        <begin position="56"/>
        <end position="57"/>
    </location>
</feature>
<feature type="non-consecutive residues" evidence="4">
    <location>
        <begin position="69"/>
        <end position="70"/>
    </location>
</feature>
<feature type="non-terminal residue" evidence="4">
    <location>
        <position position="95"/>
    </location>
</feature>
<proteinExistence type="evidence at protein level"/>
<organism>
    <name type="scientific">Naja oxiana</name>
    <name type="common">Central Asian cobra</name>
    <name type="synonym">Oxus cobra</name>
    <dbReference type="NCBI Taxonomy" id="8657"/>
    <lineage>
        <taxon>Eukaryota</taxon>
        <taxon>Metazoa</taxon>
        <taxon>Chordata</taxon>
        <taxon>Craniata</taxon>
        <taxon>Vertebrata</taxon>
        <taxon>Euteleostomi</taxon>
        <taxon>Lepidosauria</taxon>
        <taxon>Squamata</taxon>
        <taxon>Bifurcata</taxon>
        <taxon>Unidentata</taxon>
        <taxon>Episquamata</taxon>
        <taxon>Toxicofera</taxon>
        <taxon>Serpentes</taxon>
        <taxon>Colubroidea</taxon>
        <taxon>Elapidae</taxon>
        <taxon>Elapinae</taxon>
        <taxon>Naja</taxon>
    </lineage>
</organism>